<comment type="function">
    <text evidence="1">Probable C to U editing enzyme whose physiological substrate is not yet known. Does not display detectable apoB mRNA editing. Has a low intrinsic cytidine deaminase activity. May play a role in the epigenetic regulation of gene expression through the process of active DNA demethylation.</text>
</comment>
<comment type="catalytic activity">
    <reaction>
        <text>cytidine(6666) in apoB mRNA + H2O + H(+) = uridine(6666) in apoB mRNA + NH4(+)</text>
        <dbReference type="Rhea" id="RHEA:21772"/>
        <dbReference type="Rhea" id="RHEA-COMP:13888"/>
        <dbReference type="Rhea" id="RHEA-COMP:13889"/>
        <dbReference type="ChEBI" id="CHEBI:15377"/>
        <dbReference type="ChEBI" id="CHEBI:15378"/>
        <dbReference type="ChEBI" id="CHEBI:28938"/>
        <dbReference type="ChEBI" id="CHEBI:65315"/>
        <dbReference type="ChEBI" id="CHEBI:82748"/>
        <dbReference type="EC" id="3.5.4.36"/>
    </reaction>
</comment>
<comment type="cofactor">
    <cofactor evidence="1">
        <name>Zn(2+)</name>
        <dbReference type="ChEBI" id="CHEBI:29105"/>
    </cofactor>
    <text evidence="1">Binds 1 Zn(2+) ion per subunit.</text>
</comment>
<comment type="subunit">
    <text evidence="1">Homotetramer.</text>
</comment>
<comment type="similarity">
    <text evidence="4">Belongs to the cytidine and deoxycytidylate deaminase family.</text>
</comment>
<reference key="1">
    <citation type="journal article" date="2004" name="PLoS Biol.">
        <title>Ancient adaptive evolution of the primate antiviral DNA-editing enzyme APOBEC3G.</title>
        <authorList>
            <person name="Sawyer S.L."/>
            <person name="Emerman M."/>
            <person name="Malik H.S."/>
        </authorList>
    </citation>
    <scope>NUCLEOTIDE SEQUENCE [GENOMIC DNA]</scope>
</reference>
<reference key="2">
    <citation type="submission" date="2004-11" db="EMBL/GenBank/DDBJ databases">
        <authorList>
            <consortium name="The German cDNA consortium"/>
        </authorList>
    </citation>
    <scope>NUCLEOTIDE SEQUENCE [LARGE SCALE MRNA]</scope>
    <source>
        <tissue>Heart</tissue>
    </source>
</reference>
<protein>
    <recommendedName>
        <fullName>Probable C-&gt;U-editing enzyme APOBEC-2</fullName>
        <ecNumber>3.5.4.36</ecNumber>
    </recommendedName>
    <alternativeName>
        <fullName>mRNA(cytosine(6666)) deaminase 2</fullName>
    </alternativeName>
</protein>
<dbReference type="EC" id="3.5.4.36"/>
<dbReference type="EMBL" id="AY622599">
    <property type="protein sequence ID" value="AAT44388.1"/>
    <property type="molecule type" value="Genomic_DNA"/>
</dbReference>
<dbReference type="EMBL" id="AY622598">
    <property type="protein sequence ID" value="AAT44388.1"/>
    <property type="status" value="JOINED"/>
    <property type="molecule type" value="Genomic_DNA"/>
</dbReference>
<dbReference type="EMBL" id="CR858504">
    <property type="protein sequence ID" value="CAH90732.1"/>
    <property type="molecule type" value="mRNA"/>
</dbReference>
<dbReference type="BMRB" id="Q694B4"/>
<dbReference type="SMR" id="Q694B4"/>
<dbReference type="KEGG" id="pon:100172314"/>
<dbReference type="GO" id="GO:0005737">
    <property type="term" value="C:cytoplasm"/>
    <property type="evidence" value="ECO:0007669"/>
    <property type="project" value="TreeGrafter"/>
</dbReference>
<dbReference type="GO" id="GO:0005634">
    <property type="term" value="C:nucleus"/>
    <property type="evidence" value="ECO:0007669"/>
    <property type="project" value="TreeGrafter"/>
</dbReference>
<dbReference type="GO" id="GO:0004126">
    <property type="term" value="F:cytidine deaminase activity"/>
    <property type="evidence" value="ECO:0007669"/>
    <property type="project" value="TreeGrafter"/>
</dbReference>
<dbReference type="GO" id="GO:0046872">
    <property type="term" value="F:metal ion binding"/>
    <property type="evidence" value="ECO:0007669"/>
    <property type="project" value="UniProtKB-KW"/>
</dbReference>
<dbReference type="GO" id="GO:0003723">
    <property type="term" value="F:RNA binding"/>
    <property type="evidence" value="ECO:0007669"/>
    <property type="project" value="TreeGrafter"/>
</dbReference>
<dbReference type="GO" id="GO:0016554">
    <property type="term" value="P:cytidine to uridine editing"/>
    <property type="evidence" value="ECO:0007669"/>
    <property type="project" value="TreeGrafter"/>
</dbReference>
<dbReference type="GO" id="GO:0006397">
    <property type="term" value="P:mRNA processing"/>
    <property type="evidence" value="ECO:0007669"/>
    <property type="project" value="UniProtKB-KW"/>
</dbReference>
<dbReference type="GO" id="GO:0044029">
    <property type="term" value="P:positive regulation of gene expression via chromosomal CpG island demethylation"/>
    <property type="evidence" value="ECO:0000250"/>
    <property type="project" value="UniProtKB"/>
</dbReference>
<dbReference type="FunFam" id="3.40.140.10:FF:000031">
    <property type="entry name" value="Probable C-&gt;U-editing enzyme APOBEC-2"/>
    <property type="match status" value="1"/>
</dbReference>
<dbReference type="Gene3D" id="3.40.140.10">
    <property type="entry name" value="Cytidine Deaminase, domain 2"/>
    <property type="match status" value="1"/>
</dbReference>
<dbReference type="InterPro" id="IPR050610">
    <property type="entry name" value="APOBEC_Cyt_Deaminase"/>
</dbReference>
<dbReference type="InterPro" id="IPR002125">
    <property type="entry name" value="CMP_dCMP_dom"/>
</dbReference>
<dbReference type="InterPro" id="IPR016193">
    <property type="entry name" value="Cytidine_deaminase-like"/>
</dbReference>
<dbReference type="PANTHER" id="PTHR13857:SF4">
    <property type="entry name" value="C-U-EDITING ENZYME APOBEC-2"/>
    <property type="match status" value="1"/>
</dbReference>
<dbReference type="PANTHER" id="PTHR13857">
    <property type="entry name" value="MRNA EDITING ENZYME"/>
    <property type="match status" value="1"/>
</dbReference>
<dbReference type="Pfam" id="PF18772">
    <property type="entry name" value="APOBEC2"/>
    <property type="match status" value="1"/>
</dbReference>
<dbReference type="SUPFAM" id="SSF53927">
    <property type="entry name" value="Cytidine deaminase-like"/>
    <property type="match status" value="1"/>
</dbReference>
<dbReference type="PROSITE" id="PS51747">
    <property type="entry name" value="CYT_DCMP_DEAMINASES_2"/>
    <property type="match status" value="1"/>
</dbReference>
<gene>
    <name type="primary">APOBEC2</name>
</gene>
<sequence length="224" mass="25735">MAQKEEAAAATEAASQNGEDLENLDDPEKLKELIELPPFEIVTGERLPANFFKFQFRNVEYSSGRNKTFLCYVVEAQGKGGQVQASRGYLEDEHAAAHAEEAFFNTILPAFDPALRYNVTWYVSSSPCAACADRIIKTLSKTKNLRLLILVGRLFMWEELEIQDALKKLKEAGCKLRIMKPQDFEYVWQNFVEQEEGESKAFQPWEDIQENFLYYEEKLADILK</sequence>
<name>ABEC2_PONPY</name>
<feature type="chain" id="PRO_0000171751" description="Probable C-&gt;U-editing enzyme APOBEC-2">
    <location>
        <begin position="1"/>
        <end position="224"/>
    </location>
</feature>
<feature type="domain" description="CMP/dCMP-type deaminase" evidence="2">
    <location>
        <begin position="64"/>
        <end position="169"/>
    </location>
</feature>
<feature type="region of interest" description="Disordered" evidence="3">
    <location>
        <begin position="1"/>
        <end position="25"/>
    </location>
</feature>
<feature type="active site" description="Proton donor" evidence="1">
    <location>
        <position position="100"/>
    </location>
</feature>
<feature type="binding site" evidence="1">
    <location>
        <position position="60"/>
    </location>
    <ligand>
        <name>Zn(2+)</name>
        <dbReference type="ChEBI" id="CHEBI:29105"/>
        <note>catalytic</note>
    </ligand>
</feature>
<feature type="binding site" evidence="1">
    <location>
        <position position="98"/>
    </location>
    <ligand>
        <name>Zn(2+)</name>
        <dbReference type="ChEBI" id="CHEBI:29105"/>
        <note>catalytic</note>
    </ligand>
</feature>
<feature type="binding site" evidence="1">
    <location>
        <position position="128"/>
    </location>
    <ligand>
        <name>Zn(2+)</name>
        <dbReference type="ChEBI" id="CHEBI:29105"/>
        <note>catalytic</note>
    </ligand>
</feature>
<feature type="binding site" evidence="1">
    <location>
        <position position="131"/>
    </location>
    <ligand>
        <name>Zn(2+)</name>
        <dbReference type="ChEBI" id="CHEBI:29105"/>
        <note>catalytic</note>
    </ligand>
</feature>
<evidence type="ECO:0000250" key="1">
    <source>
        <dbReference type="UniProtKB" id="Q9Y235"/>
    </source>
</evidence>
<evidence type="ECO:0000255" key="2">
    <source>
        <dbReference type="PROSITE-ProRule" id="PRU01083"/>
    </source>
</evidence>
<evidence type="ECO:0000256" key="3">
    <source>
        <dbReference type="SAM" id="MobiDB-lite"/>
    </source>
</evidence>
<evidence type="ECO:0000305" key="4"/>
<accession>Q694B4</accession>
<organism>
    <name type="scientific">Pongo pygmaeus</name>
    <name type="common">Bornean orangutan</name>
    <dbReference type="NCBI Taxonomy" id="9600"/>
    <lineage>
        <taxon>Eukaryota</taxon>
        <taxon>Metazoa</taxon>
        <taxon>Chordata</taxon>
        <taxon>Craniata</taxon>
        <taxon>Vertebrata</taxon>
        <taxon>Euteleostomi</taxon>
        <taxon>Mammalia</taxon>
        <taxon>Eutheria</taxon>
        <taxon>Euarchontoglires</taxon>
        <taxon>Primates</taxon>
        <taxon>Haplorrhini</taxon>
        <taxon>Catarrhini</taxon>
        <taxon>Hominidae</taxon>
        <taxon>Pongo</taxon>
    </lineage>
</organism>
<proteinExistence type="evidence at transcript level"/>
<keyword id="KW-0378">Hydrolase</keyword>
<keyword id="KW-0479">Metal-binding</keyword>
<keyword id="KW-0507">mRNA processing</keyword>
<keyword id="KW-0862">Zinc</keyword>